<organism>
    <name type="scientific">Salmonella paratyphi A (strain ATCC 9150 / SARB42)</name>
    <dbReference type="NCBI Taxonomy" id="295319"/>
    <lineage>
        <taxon>Bacteria</taxon>
        <taxon>Pseudomonadati</taxon>
        <taxon>Pseudomonadota</taxon>
        <taxon>Gammaproteobacteria</taxon>
        <taxon>Enterobacterales</taxon>
        <taxon>Enterobacteriaceae</taxon>
        <taxon>Salmonella</taxon>
    </lineage>
</organism>
<gene>
    <name evidence="1" type="primary">katG</name>
    <name type="ordered locus">SPA3952</name>
</gene>
<proteinExistence type="inferred from homology"/>
<dbReference type="EC" id="1.11.1.21" evidence="1"/>
<dbReference type="EMBL" id="CP000026">
    <property type="protein sequence ID" value="AAV79715.1"/>
    <property type="molecule type" value="Genomic_DNA"/>
</dbReference>
<dbReference type="RefSeq" id="WP_000108111.1">
    <property type="nucleotide sequence ID" value="NC_006511.1"/>
</dbReference>
<dbReference type="SMR" id="Q5PK60"/>
<dbReference type="PeroxiBase" id="3659">
    <property type="entry name" value="SepaCP01_ATCC9150"/>
</dbReference>
<dbReference type="KEGG" id="spt:SPA3952"/>
<dbReference type="HOGENOM" id="CLU_025424_2_0_6"/>
<dbReference type="Proteomes" id="UP000008185">
    <property type="component" value="Chromosome"/>
</dbReference>
<dbReference type="GO" id="GO:0005829">
    <property type="term" value="C:cytosol"/>
    <property type="evidence" value="ECO:0007669"/>
    <property type="project" value="TreeGrafter"/>
</dbReference>
<dbReference type="GO" id="GO:0004096">
    <property type="term" value="F:catalase activity"/>
    <property type="evidence" value="ECO:0007669"/>
    <property type="project" value="UniProtKB-UniRule"/>
</dbReference>
<dbReference type="GO" id="GO:0020037">
    <property type="term" value="F:heme binding"/>
    <property type="evidence" value="ECO:0007669"/>
    <property type="project" value="InterPro"/>
</dbReference>
<dbReference type="GO" id="GO:0046872">
    <property type="term" value="F:metal ion binding"/>
    <property type="evidence" value="ECO:0007669"/>
    <property type="project" value="UniProtKB-KW"/>
</dbReference>
<dbReference type="GO" id="GO:0070301">
    <property type="term" value="P:cellular response to hydrogen peroxide"/>
    <property type="evidence" value="ECO:0007669"/>
    <property type="project" value="TreeGrafter"/>
</dbReference>
<dbReference type="GO" id="GO:0042744">
    <property type="term" value="P:hydrogen peroxide catabolic process"/>
    <property type="evidence" value="ECO:0007669"/>
    <property type="project" value="UniProtKB-KW"/>
</dbReference>
<dbReference type="CDD" id="cd08200">
    <property type="entry name" value="catalase_peroxidase_2"/>
    <property type="match status" value="1"/>
</dbReference>
<dbReference type="FunFam" id="1.10.420.10:FF:000002">
    <property type="entry name" value="Catalase-peroxidase"/>
    <property type="match status" value="1"/>
</dbReference>
<dbReference type="FunFam" id="1.10.420.10:FF:000004">
    <property type="entry name" value="Catalase-peroxidase"/>
    <property type="match status" value="1"/>
</dbReference>
<dbReference type="FunFam" id="1.10.520.10:FF:000002">
    <property type="entry name" value="Catalase-peroxidase"/>
    <property type="match status" value="1"/>
</dbReference>
<dbReference type="Gene3D" id="1.10.520.10">
    <property type="match status" value="2"/>
</dbReference>
<dbReference type="Gene3D" id="1.10.420.10">
    <property type="entry name" value="Peroxidase, domain 2"/>
    <property type="match status" value="2"/>
</dbReference>
<dbReference type="HAMAP" id="MF_01961">
    <property type="entry name" value="Catal_peroxid"/>
    <property type="match status" value="1"/>
</dbReference>
<dbReference type="InterPro" id="IPR000763">
    <property type="entry name" value="Catalase_peroxidase"/>
</dbReference>
<dbReference type="InterPro" id="IPR002016">
    <property type="entry name" value="Haem_peroxidase"/>
</dbReference>
<dbReference type="InterPro" id="IPR010255">
    <property type="entry name" value="Haem_peroxidase_sf"/>
</dbReference>
<dbReference type="InterPro" id="IPR019794">
    <property type="entry name" value="Peroxidases_AS"/>
</dbReference>
<dbReference type="InterPro" id="IPR019793">
    <property type="entry name" value="Peroxidases_heam-ligand_BS"/>
</dbReference>
<dbReference type="NCBIfam" id="TIGR00198">
    <property type="entry name" value="cat_per_HPI"/>
    <property type="match status" value="1"/>
</dbReference>
<dbReference type="NCBIfam" id="NF011635">
    <property type="entry name" value="PRK15061.1"/>
    <property type="match status" value="1"/>
</dbReference>
<dbReference type="PANTHER" id="PTHR30555:SF0">
    <property type="entry name" value="CATALASE-PEROXIDASE"/>
    <property type="match status" value="1"/>
</dbReference>
<dbReference type="PANTHER" id="PTHR30555">
    <property type="entry name" value="HYDROPEROXIDASE I, BIFUNCTIONAL CATALASE-PEROXIDASE"/>
    <property type="match status" value="1"/>
</dbReference>
<dbReference type="Pfam" id="PF00141">
    <property type="entry name" value="peroxidase"/>
    <property type="match status" value="2"/>
</dbReference>
<dbReference type="PRINTS" id="PR00460">
    <property type="entry name" value="BPEROXIDASE"/>
</dbReference>
<dbReference type="PRINTS" id="PR00458">
    <property type="entry name" value="PEROXIDASE"/>
</dbReference>
<dbReference type="SUPFAM" id="SSF48113">
    <property type="entry name" value="Heme-dependent peroxidases"/>
    <property type="match status" value="2"/>
</dbReference>
<dbReference type="PROSITE" id="PS00435">
    <property type="entry name" value="PEROXIDASE_1"/>
    <property type="match status" value="1"/>
</dbReference>
<dbReference type="PROSITE" id="PS00436">
    <property type="entry name" value="PEROXIDASE_2"/>
    <property type="match status" value="1"/>
</dbReference>
<dbReference type="PROSITE" id="PS50873">
    <property type="entry name" value="PEROXIDASE_4"/>
    <property type="match status" value="1"/>
</dbReference>
<feature type="chain" id="PRO_0000354908" description="Catalase-peroxidase">
    <location>
        <begin position="1"/>
        <end position="726"/>
    </location>
</feature>
<feature type="region of interest" description="Disordered" evidence="2">
    <location>
        <begin position="1"/>
        <end position="33"/>
    </location>
</feature>
<feature type="active site" description="Proton acceptor" evidence="1">
    <location>
        <position position="106"/>
    </location>
</feature>
<feature type="binding site" description="axial binding residue" evidence="1">
    <location>
        <position position="267"/>
    </location>
    <ligand>
        <name>heme b</name>
        <dbReference type="ChEBI" id="CHEBI:60344"/>
    </ligand>
    <ligandPart>
        <name>Fe</name>
        <dbReference type="ChEBI" id="CHEBI:18248"/>
    </ligandPart>
</feature>
<feature type="site" description="Transition state stabilizer" evidence="1">
    <location>
        <position position="102"/>
    </location>
</feature>
<feature type="cross-link" description="Tryptophyl-tyrosyl-methioninium (Trp-Tyr) (with M-252)" evidence="1">
    <location>
        <begin position="105"/>
        <end position="226"/>
    </location>
</feature>
<feature type="cross-link" description="Tryptophyl-tyrosyl-methioninium (Tyr-Met) (with W-105)" evidence="1">
    <location>
        <begin position="226"/>
        <end position="252"/>
    </location>
</feature>
<sequence length="726" mass="79627">MSTTDDTHNTLSTGKCPFHQGGHDRSAGAGTASRDWWPNQLRVDLLNQHSNRSNPLGEDFDYRKEFSKLDYSALKGDLKALLTDSQPWWPADWGSYVGLFIRMAWHGAGTYRSIDGRGGAGRGQQRFAPLNSWPDNVSLDKARRLLWPIKQKYGQKISWADLFILAGNVALENSGFRTFGFGAGREDVWEPDLDVNWGDEKAWLTHRHPEALAKAPLGATEMGLIYVNPEGPDHSGEPLSAAAAIRATFGNMGMNDEETVALIAGGHTLGKTHGAAAASHVGADPEAAPIEAQGLGWASSYGSGVGADAITSGLEVVWTQTPTQWSNYFFENLFKYEWVQTRSPAGAIQFEAVDAPDIIPDPFDPSKKRKPTMLVTDLTLRFDPEFEKISRRFLNDPQAFNEAFARAWFKLTHRDMGPKARYIGPEVPKEDLIWQDPLPQPLYQPTQEDIINLKAAIAASGLSISEMVSVAWASASTFRGGDKRGGANGARLALAPQRDWEVNAVAARVLPVLEALQKTTNKASLADIIVLAGVVGIEQAAAAAGVSISVPFAPGRVDARQDQTDIEMFSLLEPIADGFRNYRARLDVSTTESLLIDKAQQLTLTAPEMTVLVGGMRVLGTNFDGSQNGVFTDRPGVLSTDFFANLLDMRYEWKPTDESNELFEGRDRLTGEVKYTATRADLVFGSNSVLRALAEVYACSDAHEKFVKDFVAAWVKVMNLDRFDLL</sequence>
<keyword id="KW-0349">Heme</keyword>
<keyword id="KW-0376">Hydrogen peroxide</keyword>
<keyword id="KW-0408">Iron</keyword>
<keyword id="KW-0479">Metal-binding</keyword>
<keyword id="KW-0560">Oxidoreductase</keyword>
<keyword id="KW-0575">Peroxidase</keyword>
<name>KATG_SALPA</name>
<protein>
    <recommendedName>
        <fullName evidence="1">Catalase-peroxidase</fullName>
        <shortName evidence="1">CP</shortName>
        <ecNumber evidence="1">1.11.1.21</ecNumber>
    </recommendedName>
    <alternativeName>
        <fullName evidence="1">Peroxidase/catalase</fullName>
    </alternativeName>
</protein>
<reference key="1">
    <citation type="journal article" date="2004" name="Nat. Genet.">
        <title>Comparison of genome degradation in Paratyphi A and Typhi, human-restricted serovars of Salmonella enterica that cause typhoid.</title>
        <authorList>
            <person name="McClelland M."/>
            <person name="Sanderson K.E."/>
            <person name="Clifton S.W."/>
            <person name="Latreille P."/>
            <person name="Porwollik S."/>
            <person name="Sabo A."/>
            <person name="Meyer R."/>
            <person name="Bieri T."/>
            <person name="Ozersky P."/>
            <person name="McLellan M."/>
            <person name="Harkins C.R."/>
            <person name="Wang C."/>
            <person name="Nguyen C."/>
            <person name="Berghoff A."/>
            <person name="Elliott G."/>
            <person name="Kohlberg S."/>
            <person name="Strong C."/>
            <person name="Du F."/>
            <person name="Carter J."/>
            <person name="Kremizki C."/>
            <person name="Layman D."/>
            <person name="Leonard S."/>
            <person name="Sun H."/>
            <person name="Fulton L."/>
            <person name="Nash W."/>
            <person name="Miner T."/>
            <person name="Minx P."/>
            <person name="Delehaunty K."/>
            <person name="Fronick C."/>
            <person name="Magrini V."/>
            <person name="Nhan M."/>
            <person name="Warren W."/>
            <person name="Florea L."/>
            <person name="Spieth J."/>
            <person name="Wilson R.K."/>
        </authorList>
    </citation>
    <scope>NUCLEOTIDE SEQUENCE [LARGE SCALE GENOMIC DNA]</scope>
    <source>
        <strain>ATCC 9150 / SARB42</strain>
    </source>
</reference>
<evidence type="ECO:0000255" key="1">
    <source>
        <dbReference type="HAMAP-Rule" id="MF_01961"/>
    </source>
</evidence>
<evidence type="ECO:0000256" key="2">
    <source>
        <dbReference type="SAM" id="MobiDB-lite"/>
    </source>
</evidence>
<comment type="function">
    <text evidence="1">Bifunctional enzyme with both catalase and broad-spectrum peroxidase activity.</text>
</comment>
<comment type="catalytic activity">
    <reaction evidence="1">
        <text>H2O2 + AH2 = A + 2 H2O</text>
        <dbReference type="Rhea" id="RHEA:30275"/>
        <dbReference type="ChEBI" id="CHEBI:13193"/>
        <dbReference type="ChEBI" id="CHEBI:15377"/>
        <dbReference type="ChEBI" id="CHEBI:16240"/>
        <dbReference type="ChEBI" id="CHEBI:17499"/>
        <dbReference type="EC" id="1.11.1.21"/>
    </reaction>
</comment>
<comment type="catalytic activity">
    <reaction evidence="1">
        <text>2 H2O2 = O2 + 2 H2O</text>
        <dbReference type="Rhea" id="RHEA:20309"/>
        <dbReference type="ChEBI" id="CHEBI:15377"/>
        <dbReference type="ChEBI" id="CHEBI:15379"/>
        <dbReference type="ChEBI" id="CHEBI:16240"/>
        <dbReference type="EC" id="1.11.1.21"/>
    </reaction>
</comment>
<comment type="cofactor">
    <cofactor evidence="1">
        <name>heme b</name>
        <dbReference type="ChEBI" id="CHEBI:60344"/>
    </cofactor>
    <text evidence="1">Binds 1 heme b (iron(II)-protoporphyrin IX) group per dimer.</text>
</comment>
<comment type="subunit">
    <text evidence="1">Homodimer or homotetramer.</text>
</comment>
<comment type="PTM">
    <text evidence="1">Formation of the three residue Trp-Tyr-Met cross-link is important for the catalase, but not the peroxidase activity of the enzyme.</text>
</comment>
<comment type="similarity">
    <text evidence="1">Belongs to the peroxidase family. Peroxidase/catalase subfamily.</text>
</comment>
<accession>Q5PK60</accession>